<comment type="function">
    <text evidence="1">Acts as a processive, ATP-dependent zinc metallopeptidase for both cytoplasmic and membrane proteins. Plays a role in the quality control of integral membrane proteins.</text>
</comment>
<comment type="cofactor">
    <cofactor evidence="1">
        <name>Zn(2+)</name>
        <dbReference type="ChEBI" id="CHEBI:29105"/>
    </cofactor>
    <text evidence="1">Binds 1 zinc ion per subunit.</text>
</comment>
<comment type="subunit">
    <text evidence="1">Homohexamer.</text>
</comment>
<comment type="subcellular location">
    <subcellularLocation>
        <location evidence="1">Cell inner membrane</location>
        <topology evidence="1">Multi-pass membrane protein</topology>
        <orientation evidence="1">Cytoplasmic side</orientation>
    </subcellularLocation>
</comment>
<comment type="similarity">
    <text evidence="1">In the central section; belongs to the AAA ATPase family.</text>
</comment>
<comment type="similarity">
    <text evidence="1">In the C-terminal section; belongs to the peptidase M41 family.</text>
</comment>
<dbReference type="EC" id="3.4.24.-" evidence="1"/>
<dbReference type="EMBL" id="CP001981">
    <property type="protein sequence ID" value="ADE35315.1"/>
    <property type="molecule type" value="Genomic_DNA"/>
</dbReference>
<dbReference type="SMR" id="D5D8E3"/>
<dbReference type="KEGG" id="smh:DMIN_00030"/>
<dbReference type="HOGENOM" id="CLU_000688_23_2_10"/>
<dbReference type="Proteomes" id="UP000008245">
    <property type="component" value="Chromosome"/>
</dbReference>
<dbReference type="GO" id="GO:0005886">
    <property type="term" value="C:plasma membrane"/>
    <property type="evidence" value="ECO:0007669"/>
    <property type="project" value="UniProtKB-SubCell"/>
</dbReference>
<dbReference type="GO" id="GO:0005524">
    <property type="term" value="F:ATP binding"/>
    <property type="evidence" value="ECO:0007669"/>
    <property type="project" value="UniProtKB-UniRule"/>
</dbReference>
<dbReference type="GO" id="GO:0016887">
    <property type="term" value="F:ATP hydrolysis activity"/>
    <property type="evidence" value="ECO:0007669"/>
    <property type="project" value="UniProtKB-UniRule"/>
</dbReference>
<dbReference type="GO" id="GO:0004176">
    <property type="term" value="F:ATP-dependent peptidase activity"/>
    <property type="evidence" value="ECO:0007669"/>
    <property type="project" value="InterPro"/>
</dbReference>
<dbReference type="GO" id="GO:0004222">
    <property type="term" value="F:metalloendopeptidase activity"/>
    <property type="evidence" value="ECO:0007669"/>
    <property type="project" value="InterPro"/>
</dbReference>
<dbReference type="GO" id="GO:0008270">
    <property type="term" value="F:zinc ion binding"/>
    <property type="evidence" value="ECO:0007669"/>
    <property type="project" value="UniProtKB-UniRule"/>
</dbReference>
<dbReference type="GO" id="GO:0030163">
    <property type="term" value="P:protein catabolic process"/>
    <property type="evidence" value="ECO:0007669"/>
    <property type="project" value="UniProtKB-UniRule"/>
</dbReference>
<dbReference type="GO" id="GO:0006508">
    <property type="term" value="P:proteolysis"/>
    <property type="evidence" value="ECO:0007669"/>
    <property type="project" value="UniProtKB-KW"/>
</dbReference>
<dbReference type="CDD" id="cd19501">
    <property type="entry name" value="RecA-like_FtsH"/>
    <property type="match status" value="1"/>
</dbReference>
<dbReference type="FunFam" id="1.10.8.60:FF:000001">
    <property type="entry name" value="ATP-dependent zinc metalloprotease FtsH"/>
    <property type="match status" value="1"/>
</dbReference>
<dbReference type="FunFam" id="1.20.58.760:FF:000001">
    <property type="entry name" value="ATP-dependent zinc metalloprotease FtsH"/>
    <property type="match status" value="1"/>
</dbReference>
<dbReference type="FunFam" id="3.40.50.300:FF:000001">
    <property type="entry name" value="ATP-dependent zinc metalloprotease FtsH"/>
    <property type="match status" value="1"/>
</dbReference>
<dbReference type="Gene3D" id="1.10.8.60">
    <property type="match status" value="1"/>
</dbReference>
<dbReference type="Gene3D" id="3.40.50.300">
    <property type="entry name" value="P-loop containing nucleotide triphosphate hydrolases"/>
    <property type="match status" value="1"/>
</dbReference>
<dbReference type="Gene3D" id="1.20.58.760">
    <property type="entry name" value="Peptidase M41"/>
    <property type="match status" value="1"/>
</dbReference>
<dbReference type="HAMAP" id="MF_01458">
    <property type="entry name" value="FtsH"/>
    <property type="match status" value="1"/>
</dbReference>
<dbReference type="InterPro" id="IPR003593">
    <property type="entry name" value="AAA+_ATPase"/>
</dbReference>
<dbReference type="InterPro" id="IPR041569">
    <property type="entry name" value="AAA_lid_3"/>
</dbReference>
<dbReference type="InterPro" id="IPR050928">
    <property type="entry name" value="ATP-dep_Zn_Metalloprotease"/>
</dbReference>
<dbReference type="InterPro" id="IPR003959">
    <property type="entry name" value="ATPase_AAA_core"/>
</dbReference>
<dbReference type="InterPro" id="IPR003960">
    <property type="entry name" value="ATPase_AAA_CS"/>
</dbReference>
<dbReference type="InterPro" id="IPR005936">
    <property type="entry name" value="FtsH"/>
</dbReference>
<dbReference type="InterPro" id="IPR027417">
    <property type="entry name" value="P-loop_NTPase"/>
</dbReference>
<dbReference type="InterPro" id="IPR000642">
    <property type="entry name" value="Peptidase_M41"/>
</dbReference>
<dbReference type="InterPro" id="IPR037219">
    <property type="entry name" value="Peptidase_M41-like"/>
</dbReference>
<dbReference type="NCBIfam" id="TIGR01241">
    <property type="entry name" value="FtsH_fam"/>
    <property type="match status" value="1"/>
</dbReference>
<dbReference type="PANTHER" id="PTHR43655:SF2">
    <property type="entry name" value="AFG3 LIKE MATRIX AAA PEPTIDASE SUBUNIT 2, ISOFORM A"/>
    <property type="match status" value="1"/>
</dbReference>
<dbReference type="PANTHER" id="PTHR43655">
    <property type="entry name" value="ATP-DEPENDENT PROTEASE"/>
    <property type="match status" value="1"/>
</dbReference>
<dbReference type="Pfam" id="PF00004">
    <property type="entry name" value="AAA"/>
    <property type="match status" value="1"/>
</dbReference>
<dbReference type="Pfam" id="PF17862">
    <property type="entry name" value="AAA_lid_3"/>
    <property type="match status" value="1"/>
</dbReference>
<dbReference type="Pfam" id="PF01434">
    <property type="entry name" value="Peptidase_M41"/>
    <property type="match status" value="1"/>
</dbReference>
<dbReference type="SMART" id="SM00382">
    <property type="entry name" value="AAA"/>
    <property type="match status" value="1"/>
</dbReference>
<dbReference type="SUPFAM" id="SSF140990">
    <property type="entry name" value="FtsH protease domain-like"/>
    <property type="match status" value="1"/>
</dbReference>
<dbReference type="SUPFAM" id="SSF52540">
    <property type="entry name" value="P-loop containing nucleoside triphosphate hydrolases"/>
    <property type="match status" value="1"/>
</dbReference>
<dbReference type="PROSITE" id="PS00674">
    <property type="entry name" value="AAA"/>
    <property type="match status" value="1"/>
</dbReference>
<organism>
    <name type="scientific">Karelsulcia muelleri (strain DMIN)</name>
    <name type="common">Sulcia muelleri</name>
    <dbReference type="NCBI Taxonomy" id="641892"/>
    <lineage>
        <taxon>Bacteria</taxon>
        <taxon>Pseudomonadati</taxon>
        <taxon>Bacteroidota</taxon>
        <taxon>Flavobacteriia</taxon>
        <taxon>Flavobacteriales</taxon>
        <taxon>Candidatus Karelsulcia</taxon>
    </lineage>
</organism>
<reference key="1">
    <citation type="journal article" date="2010" name="PLoS ONE">
        <title>One bacterial cell, one complete genome.</title>
        <authorList>
            <person name="Woyke T."/>
            <person name="Tighe D."/>
            <person name="Mavromatis K."/>
            <person name="Clum A."/>
            <person name="Copeland A."/>
            <person name="Schackwitz W."/>
            <person name="Lapidus A."/>
            <person name="Wu D."/>
            <person name="McCutcheon J.P."/>
            <person name="McDonald B.R."/>
            <person name="Moran N.A."/>
            <person name="Bristow J."/>
            <person name="Cheng J.F."/>
        </authorList>
    </citation>
    <scope>NUCLEOTIDE SEQUENCE [LARGE SCALE GENOMIC DNA]</scope>
    <source>
        <strain>DMIN</strain>
    </source>
</reference>
<feature type="chain" id="PRO_5000582995" description="ATP-dependent zinc metalloprotease FtsH">
    <location>
        <begin position="1"/>
        <end position="619"/>
    </location>
</feature>
<feature type="topological domain" description="Cytoplasmic" evidence="1">
    <location>
        <begin position="1"/>
        <end position="11"/>
    </location>
</feature>
<feature type="transmembrane region" description="Helical" evidence="1">
    <location>
        <begin position="12"/>
        <end position="32"/>
    </location>
</feature>
<feature type="topological domain" description="Periplasmic" evidence="1">
    <location>
        <begin position="33"/>
        <end position="131"/>
    </location>
</feature>
<feature type="transmembrane region" description="Helical" evidence="1">
    <location>
        <begin position="132"/>
        <end position="152"/>
    </location>
</feature>
<feature type="topological domain" description="Cytoplasmic" evidence="1">
    <location>
        <begin position="153"/>
        <end position="619"/>
    </location>
</feature>
<feature type="active site" evidence="1">
    <location>
        <position position="448"/>
    </location>
</feature>
<feature type="binding site" evidence="1">
    <location>
        <begin position="224"/>
        <end position="231"/>
    </location>
    <ligand>
        <name>ATP</name>
        <dbReference type="ChEBI" id="CHEBI:30616"/>
    </ligand>
</feature>
<feature type="binding site" evidence="1">
    <location>
        <position position="447"/>
    </location>
    <ligand>
        <name>Zn(2+)</name>
        <dbReference type="ChEBI" id="CHEBI:29105"/>
        <note>catalytic</note>
    </ligand>
</feature>
<feature type="binding site" evidence="1">
    <location>
        <position position="451"/>
    </location>
    <ligand>
        <name>Zn(2+)</name>
        <dbReference type="ChEBI" id="CHEBI:29105"/>
        <note>catalytic</note>
    </ligand>
</feature>
<feature type="binding site" evidence="1">
    <location>
        <position position="522"/>
    </location>
    <ligand>
        <name>Zn(2+)</name>
        <dbReference type="ChEBI" id="CHEBI:29105"/>
        <note>catalytic</note>
    </ligand>
</feature>
<name>FTSH_KARMD</name>
<proteinExistence type="inferred from homology"/>
<accession>D5D8E3</accession>
<gene>
    <name evidence="1" type="primary">ftsH</name>
    <name type="ordered locus">DMIN_00030</name>
</gene>
<keyword id="KW-0067">ATP-binding</keyword>
<keyword id="KW-0997">Cell inner membrane</keyword>
<keyword id="KW-1003">Cell membrane</keyword>
<keyword id="KW-0378">Hydrolase</keyword>
<keyword id="KW-0472">Membrane</keyword>
<keyword id="KW-0479">Metal-binding</keyword>
<keyword id="KW-0482">Metalloprotease</keyword>
<keyword id="KW-0547">Nucleotide-binding</keyword>
<keyword id="KW-0645">Protease</keyword>
<keyword id="KW-0812">Transmembrane</keyword>
<keyword id="KW-1133">Transmembrane helix</keyword>
<keyword id="KW-0862">Zinc</keyword>
<sequence length="619" mass="71722">MDKQSKFRIKTFFKKIIFFLIIFCFFYFFNFIKKTKKITHTTQDKFFELLSKNKINKFIVLNKKKVSFTLNEKKSHLDSNNYNFFSKLHLSRYEFEIGDLQLFQKKIDFYKELYEINPNFEFKNYKIYTVLNFFYDYGFFLMIIIICWIFIFRKIASRSSESEFKFKIGKSKAKLYYYNNITFKDVAGLEGPKEEIKEIVDFLKSPNKYTKLGGKIPKGALLIGPPGTGKTLLAKAVAGEAQVPFFSLSGSDFVEMFVGVGASRVRDLFYIAKLKSPSIIFIDEIDAIGRARIKNNIPGGNDERENTLNKLLTEMDGFSTKTNVIVLAATNRYDVLDDALLRSGRFDRTIFIDLPSLKERKDIMKVHLKKIKFSKSIDLDFISRQIPGFSGADISNICNEAALLAARRNKVKVETKDFIDTIYRRIGGIEKKNILIKKNEKKRIAYHETGHAIISWIIEYAHSVFQITITPRGQSLGAAWYIPEERQITTEDQMKDEICTLLGGRAAEYLIFNNKSTGALNDLERITKQAQSMVKFFGLSSLGNISYFDSTGRNDFSLEKAYSEKTSEIIDKEINKIIKEQYKRALEILKKNYDKLIFLAEKLFKKEVLFKEDFASILD</sequence>
<evidence type="ECO:0000255" key="1">
    <source>
        <dbReference type="HAMAP-Rule" id="MF_01458"/>
    </source>
</evidence>
<protein>
    <recommendedName>
        <fullName evidence="1">ATP-dependent zinc metalloprotease FtsH</fullName>
        <ecNumber evidence="1">3.4.24.-</ecNumber>
    </recommendedName>
</protein>